<reference key="1">
    <citation type="journal article" date="2005" name="J. Bacteriol.">
        <title>Insights on evolution of virulence and resistance from the complete genome analysis of an early methicillin-resistant Staphylococcus aureus strain and a biofilm-producing methicillin-resistant Staphylococcus epidermidis strain.</title>
        <authorList>
            <person name="Gill S.R."/>
            <person name="Fouts D.E."/>
            <person name="Archer G.L."/>
            <person name="Mongodin E.F."/>
            <person name="DeBoy R.T."/>
            <person name="Ravel J."/>
            <person name="Paulsen I.T."/>
            <person name="Kolonay J.F."/>
            <person name="Brinkac L.M."/>
            <person name="Beanan M.J."/>
            <person name="Dodson R.J."/>
            <person name="Daugherty S.C."/>
            <person name="Madupu R."/>
            <person name="Angiuoli S.V."/>
            <person name="Durkin A.S."/>
            <person name="Haft D.H."/>
            <person name="Vamathevan J.J."/>
            <person name="Khouri H."/>
            <person name="Utterback T.R."/>
            <person name="Lee C."/>
            <person name="Dimitrov G."/>
            <person name="Jiang L."/>
            <person name="Qin H."/>
            <person name="Weidman J."/>
            <person name="Tran K."/>
            <person name="Kang K.H."/>
            <person name="Hance I.R."/>
            <person name="Nelson K.E."/>
            <person name="Fraser C.M."/>
        </authorList>
    </citation>
    <scope>NUCLEOTIDE SEQUENCE [LARGE SCALE GENOMIC DNA]</scope>
    <source>
        <strain>ATCC 35984 / DSM 28319 / BCRC 17069 / CCUG 31568 / BM 3577 / RP62A</strain>
    </source>
</reference>
<accession>Q5HNN6</accession>
<proteinExistence type="inferred from homology"/>
<sequence>MSFEKSIKAMEQAEKLMPGGVNSPVRAFKSVDTPAIFMDHGEGSKIYDIDGNEYIDYVLSWGPLILGHKNQQVISKLHEAVDKGTSFGASTLQENKLAELVIDRVPSIEKVRMVSSGTEATLDTLRLARGYTGRNKIIKFEGCYHGHSDSLLIKAGSGVATLGLPDSPGVPEGIAKNTITVPYNDLDSLKLAFEKYGDDIAGVIVEPVAGNMGVVPPVNGFLQGLRDITNEYGALLIFDEVMTGFRVGYNCAQGYFGVTPDLTCLGKVIGGGLPVGAFGGKKEIMDYIAPVGTIYQAGTLSGNPLAMTSGYETLSQLTPESYEYFNSLGDILEKGLKEVFAKHNVPITVNRAGSMIGYFLNEGPVTNFEEANKSDLKLFSNMYREMAKEGVFLPPSQFEGTFLSTAHTKDDIEKTIQAFDNALSRIV</sequence>
<feature type="chain" id="PRO_0000120456" description="Glutamate-1-semialdehyde 2,1-aminomutase 1">
    <location>
        <begin position="1"/>
        <end position="427"/>
    </location>
</feature>
<feature type="modified residue" description="N6-(pyridoxal phosphate)lysine" evidence="1">
    <location>
        <position position="267"/>
    </location>
</feature>
<gene>
    <name evidence="1" type="primary">hemL1</name>
    <name type="ordered locus">SERP1231</name>
</gene>
<comment type="catalytic activity">
    <reaction evidence="1">
        <text>(S)-4-amino-5-oxopentanoate = 5-aminolevulinate</text>
        <dbReference type="Rhea" id="RHEA:14265"/>
        <dbReference type="ChEBI" id="CHEBI:57501"/>
        <dbReference type="ChEBI" id="CHEBI:356416"/>
        <dbReference type="EC" id="5.4.3.8"/>
    </reaction>
</comment>
<comment type="cofactor">
    <cofactor evidence="1">
        <name>pyridoxal 5'-phosphate</name>
        <dbReference type="ChEBI" id="CHEBI:597326"/>
    </cofactor>
</comment>
<comment type="pathway">
    <text evidence="1">Porphyrin-containing compound metabolism; protoporphyrin-IX biosynthesis; 5-aminolevulinate from L-glutamyl-tRNA(Glu): step 2/2.</text>
</comment>
<comment type="subunit">
    <text evidence="1">Homodimer.</text>
</comment>
<comment type="subcellular location">
    <subcellularLocation>
        <location evidence="1">Cytoplasm</location>
    </subcellularLocation>
</comment>
<comment type="similarity">
    <text evidence="1">Belongs to the class-III pyridoxal-phosphate-dependent aminotransferase family. HemL subfamily.</text>
</comment>
<keyword id="KW-0963">Cytoplasm</keyword>
<keyword id="KW-0413">Isomerase</keyword>
<keyword id="KW-0627">Porphyrin biosynthesis</keyword>
<keyword id="KW-0663">Pyridoxal phosphate</keyword>
<keyword id="KW-1185">Reference proteome</keyword>
<name>GSA1_STAEQ</name>
<dbReference type="EC" id="5.4.3.8" evidence="1"/>
<dbReference type="EMBL" id="CP000029">
    <property type="protein sequence ID" value="AAW54582.1"/>
    <property type="molecule type" value="Genomic_DNA"/>
</dbReference>
<dbReference type="SMR" id="Q5HNN6"/>
<dbReference type="STRING" id="176279.SERP1231"/>
<dbReference type="KEGG" id="ser:SERP1231"/>
<dbReference type="eggNOG" id="COG0001">
    <property type="taxonomic scope" value="Bacteria"/>
</dbReference>
<dbReference type="HOGENOM" id="CLU_016922_1_5_9"/>
<dbReference type="UniPathway" id="UPA00251">
    <property type="reaction ID" value="UER00317"/>
</dbReference>
<dbReference type="Proteomes" id="UP000000531">
    <property type="component" value="Chromosome"/>
</dbReference>
<dbReference type="GO" id="GO:0005737">
    <property type="term" value="C:cytoplasm"/>
    <property type="evidence" value="ECO:0007669"/>
    <property type="project" value="UniProtKB-SubCell"/>
</dbReference>
<dbReference type="GO" id="GO:0042286">
    <property type="term" value="F:glutamate-1-semialdehyde 2,1-aminomutase activity"/>
    <property type="evidence" value="ECO:0007669"/>
    <property type="project" value="UniProtKB-UniRule"/>
</dbReference>
<dbReference type="GO" id="GO:0030170">
    <property type="term" value="F:pyridoxal phosphate binding"/>
    <property type="evidence" value="ECO:0007669"/>
    <property type="project" value="InterPro"/>
</dbReference>
<dbReference type="GO" id="GO:0008483">
    <property type="term" value="F:transaminase activity"/>
    <property type="evidence" value="ECO:0007669"/>
    <property type="project" value="InterPro"/>
</dbReference>
<dbReference type="GO" id="GO:0006782">
    <property type="term" value="P:protoporphyrinogen IX biosynthetic process"/>
    <property type="evidence" value="ECO:0007669"/>
    <property type="project" value="UniProtKB-UniRule"/>
</dbReference>
<dbReference type="CDD" id="cd00610">
    <property type="entry name" value="OAT_like"/>
    <property type="match status" value="1"/>
</dbReference>
<dbReference type="FunFam" id="3.40.640.10:FF:000021">
    <property type="entry name" value="Glutamate-1-semialdehyde 2,1-aminomutase"/>
    <property type="match status" value="1"/>
</dbReference>
<dbReference type="Gene3D" id="3.90.1150.10">
    <property type="entry name" value="Aspartate Aminotransferase, domain 1"/>
    <property type="match status" value="1"/>
</dbReference>
<dbReference type="Gene3D" id="3.40.640.10">
    <property type="entry name" value="Type I PLP-dependent aspartate aminotransferase-like (Major domain)"/>
    <property type="match status" value="1"/>
</dbReference>
<dbReference type="HAMAP" id="MF_00375">
    <property type="entry name" value="HemL_aminotrans_3"/>
    <property type="match status" value="1"/>
</dbReference>
<dbReference type="InterPro" id="IPR004639">
    <property type="entry name" value="4pyrrol_synth_GluAld_NH2Trfase"/>
</dbReference>
<dbReference type="InterPro" id="IPR005814">
    <property type="entry name" value="Aminotrans_3"/>
</dbReference>
<dbReference type="InterPro" id="IPR049704">
    <property type="entry name" value="Aminotrans_3_PPA_site"/>
</dbReference>
<dbReference type="InterPro" id="IPR015424">
    <property type="entry name" value="PyrdxlP-dep_Trfase"/>
</dbReference>
<dbReference type="InterPro" id="IPR015421">
    <property type="entry name" value="PyrdxlP-dep_Trfase_major"/>
</dbReference>
<dbReference type="InterPro" id="IPR015422">
    <property type="entry name" value="PyrdxlP-dep_Trfase_small"/>
</dbReference>
<dbReference type="NCBIfam" id="TIGR00713">
    <property type="entry name" value="hemL"/>
    <property type="match status" value="1"/>
</dbReference>
<dbReference type="NCBIfam" id="NF000818">
    <property type="entry name" value="PRK00062.1"/>
    <property type="match status" value="1"/>
</dbReference>
<dbReference type="PANTHER" id="PTHR43713">
    <property type="entry name" value="GLUTAMATE-1-SEMIALDEHYDE 2,1-AMINOMUTASE"/>
    <property type="match status" value="1"/>
</dbReference>
<dbReference type="PANTHER" id="PTHR43713:SF3">
    <property type="entry name" value="GLUTAMATE-1-SEMIALDEHYDE 2,1-AMINOMUTASE 1, CHLOROPLASTIC-RELATED"/>
    <property type="match status" value="1"/>
</dbReference>
<dbReference type="Pfam" id="PF00202">
    <property type="entry name" value="Aminotran_3"/>
    <property type="match status" value="1"/>
</dbReference>
<dbReference type="SUPFAM" id="SSF53383">
    <property type="entry name" value="PLP-dependent transferases"/>
    <property type="match status" value="1"/>
</dbReference>
<dbReference type="PROSITE" id="PS00600">
    <property type="entry name" value="AA_TRANSFER_CLASS_3"/>
    <property type="match status" value="1"/>
</dbReference>
<evidence type="ECO:0000255" key="1">
    <source>
        <dbReference type="HAMAP-Rule" id="MF_00375"/>
    </source>
</evidence>
<protein>
    <recommendedName>
        <fullName evidence="1">Glutamate-1-semialdehyde 2,1-aminomutase 1</fullName>
        <shortName evidence="1">GSA 1</shortName>
        <ecNumber evidence="1">5.4.3.8</ecNumber>
    </recommendedName>
    <alternativeName>
        <fullName evidence="1">Glutamate-1-semialdehyde aminotransferase 1</fullName>
        <shortName evidence="1">GSA-AT 1</shortName>
    </alternativeName>
</protein>
<organism>
    <name type="scientific">Staphylococcus epidermidis (strain ATCC 35984 / DSM 28319 / BCRC 17069 / CCUG 31568 / BM 3577 / RP62A)</name>
    <dbReference type="NCBI Taxonomy" id="176279"/>
    <lineage>
        <taxon>Bacteria</taxon>
        <taxon>Bacillati</taxon>
        <taxon>Bacillota</taxon>
        <taxon>Bacilli</taxon>
        <taxon>Bacillales</taxon>
        <taxon>Staphylococcaceae</taxon>
        <taxon>Staphylococcus</taxon>
    </lineage>
</organism>